<accession>A5D9M6</accession>
<accession>A5D9M5</accession>
<accession>A5D9M7</accession>
<accession>B9TSQ3</accession>
<sequence>MEPNDSTSTTMEEPESLEVLVKTLDSQTRTFIVGAQMNVKEFKEHIAASVSIPSEKQRLIYQGRVLQDDKKLQEYNVGGKVIHLVERAPPQTQLPSGASSGTGSASATHGGGPPPGTRGPGASVHDRNANSYVMVGTFNLPSDGSAVDVHINMEQAPIQSEPRVRLVMAQHMIRDIQTLLSRMECRGGSQAQHSQPPSQMPTVAPEPVALSSQTSESVESEVPPREPMAAEEVEERASAQSPGLSPSGPAPAGPTPAPETNAPNHPSPAEYVEVLQELQRLESRLQPFLQRYYEVLGAAATTDYNNNQEGREEDQRLINLVGESLRLLGNTFVALSDLRCNLACAPPRHLHVVRPMSHYTTPMVLQQAAIPIQINVGTTVTMTGNGTRPPPTPNAEAPPPGPGQASSLAPSSTTVESSTEGAPPPGPAPPPAASHPRVIRISHQSVEPVVMMHMNIQDSGTQPGGVPSAPTGPLGPTGHGQTLGQQVPGFPTAPTRVVIARPTPPQSRPSHPGGPPVSGALPGAGLGTNASLAQMVSGLVGQLLMQPVLVAQGTPGMAPPPAPATASASAGTTNTATTAGPAPGGPAQPPPPQPSASDLQFSQLLGNLLGPAGPGAGGPGMTSPTITVAMPGVPAFLQGMTDFLQATQTAAPPAPPPPPPPPPPAPEQQTAPPPGSPPGGAGSPGGLGPESLPLEFFTSVVQGVLSSLLGSLGARAGSSESIAAFIQRLSGSSNIFEPGADGALGFFGALLSLLCQNFSMVDVVMLLHGHFQPLQRLQPQLRSFFHQHYLGGQEPTPGNIRTATHTLITGLEEYVRESFSLVQVQPGVDIIRTNLEFLQEQFNSIAAHVMHCTDSGFGARLLELCNQGLFECLALNLHCLGGQQMELAAVINGRIRRMSRGVNPSLVSWLTTMMGLRLQVVLEHMPVGPDAILRYVRRVGDPPQPLPEEPMEVQGSERTSPEPQRENASPAPGTTAEEAMSRGPPPAPEGGSRDEQDGAAAETEPWAAAVPPEWVPIIQQDIQSQRKVKPQPPLSDAYLSGMPAKRRKTMQGEGPQLLLSEAVSRAAKAAGARPLTSPESLSRDLEAPEVQESYRQQLRADIQKRLQEDPNYSPQRFPNAHRAFAEDP</sequence>
<evidence type="ECO:0000250" key="1">
    <source>
        <dbReference type="UniProtKB" id="P46379"/>
    </source>
</evidence>
<evidence type="ECO:0000250" key="2">
    <source>
        <dbReference type="UniProtKB" id="Q9Z1R2"/>
    </source>
</evidence>
<evidence type="ECO:0000255" key="3">
    <source>
        <dbReference type="PROSITE-ProRule" id="PRU00214"/>
    </source>
</evidence>
<evidence type="ECO:0000256" key="4">
    <source>
        <dbReference type="SAM" id="MobiDB-lite"/>
    </source>
</evidence>
<evidence type="ECO:0000305" key="5"/>
<evidence type="ECO:0000312" key="6">
    <source>
        <dbReference type="EMBL" id="ABX82810.1"/>
    </source>
</evidence>
<feature type="chain" id="PRO_0000403751" description="Large proline-rich protein BAG6">
    <location>
        <begin position="1"/>
        <end position="1128"/>
    </location>
</feature>
<feature type="domain" description="Ubiquitin-like" evidence="3">
    <location>
        <begin position="17"/>
        <end position="92"/>
    </location>
</feature>
<feature type="repeat" description="1" evidence="1">
    <location>
        <begin position="236"/>
        <end position="265"/>
    </location>
</feature>
<feature type="repeat" description="2" evidence="1">
    <location>
        <begin position="410"/>
        <end position="438"/>
    </location>
</feature>
<feature type="repeat" description="3" evidence="1">
    <location>
        <begin position="569"/>
        <end position="596"/>
    </location>
</feature>
<feature type="repeat" description="4" evidence="1">
    <location>
        <begin position="602"/>
        <end position="630"/>
    </location>
</feature>
<feature type="region of interest" description="Disordered" evidence="4">
    <location>
        <begin position="87"/>
        <end position="126"/>
    </location>
</feature>
<feature type="region of interest" description="Disordered" evidence="4">
    <location>
        <begin position="185"/>
        <end position="267"/>
    </location>
</feature>
<feature type="region of interest" description="4 X 29 AA approximate repeats" evidence="1">
    <location>
        <begin position="236"/>
        <end position="630"/>
    </location>
</feature>
<feature type="region of interest" description="Disordered" evidence="4">
    <location>
        <begin position="380"/>
        <end position="435"/>
    </location>
</feature>
<feature type="region of interest" description="Disordered" evidence="4">
    <location>
        <begin position="456"/>
        <end position="523"/>
    </location>
</feature>
<feature type="region of interest" description="Disordered" evidence="4">
    <location>
        <begin position="555"/>
        <end position="598"/>
    </location>
</feature>
<feature type="region of interest" description="Disordered" evidence="4">
    <location>
        <begin position="648"/>
        <end position="689"/>
    </location>
</feature>
<feature type="region of interest" description="Disordered" evidence="4">
    <location>
        <begin position="939"/>
        <end position="1128"/>
    </location>
</feature>
<feature type="region of interest" description="Required for interaction with GET4" evidence="1">
    <location>
        <begin position="1006"/>
        <end position="1036"/>
    </location>
</feature>
<feature type="region of interest" description="Sufficient for the delivery of client proteins to the endoplasmic reticulum" evidence="1">
    <location>
        <begin position="1018"/>
        <end position="1128"/>
    </location>
</feature>
<feature type="region of interest" description="BAG-similar domain, required and sufficient for interaction with UBL4A" evidence="1">
    <location>
        <begin position="1054"/>
        <end position="1111"/>
    </location>
</feature>
<feature type="short sequence motif" description="Nuclear localization site" evidence="1">
    <location>
        <begin position="1008"/>
        <end position="1050"/>
    </location>
</feature>
<feature type="compositionally biased region" description="Low complexity" evidence="4">
    <location>
        <begin position="95"/>
        <end position="108"/>
    </location>
</feature>
<feature type="compositionally biased region" description="Polar residues" evidence="4">
    <location>
        <begin position="189"/>
        <end position="201"/>
    </location>
</feature>
<feature type="compositionally biased region" description="Low complexity" evidence="4">
    <location>
        <begin position="238"/>
        <end position="247"/>
    </location>
</feature>
<feature type="compositionally biased region" description="Pro residues" evidence="4">
    <location>
        <begin position="248"/>
        <end position="257"/>
    </location>
</feature>
<feature type="compositionally biased region" description="Pro residues" evidence="4">
    <location>
        <begin position="388"/>
        <end position="402"/>
    </location>
</feature>
<feature type="compositionally biased region" description="Low complexity" evidence="4">
    <location>
        <begin position="403"/>
        <end position="412"/>
    </location>
</feature>
<feature type="compositionally biased region" description="Pro residues" evidence="4">
    <location>
        <begin position="422"/>
        <end position="433"/>
    </location>
</feature>
<feature type="compositionally biased region" description="Pro residues" evidence="4">
    <location>
        <begin position="502"/>
        <end position="515"/>
    </location>
</feature>
<feature type="compositionally biased region" description="Low complexity" evidence="4">
    <location>
        <begin position="564"/>
        <end position="581"/>
    </location>
</feature>
<feature type="compositionally biased region" description="Pro residues" evidence="4">
    <location>
        <begin position="583"/>
        <end position="594"/>
    </location>
</feature>
<feature type="compositionally biased region" description="Pro residues" evidence="4">
    <location>
        <begin position="652"/>
        <end position="677"/>
    </location>
</feature>
<feature type="compositionally biased region" description="Gly residues" evidence="4">
    <location>
        <begin position="678"/>
        <end position="688"/>
    </location>
</feature>
<feature type="compositionally biased region" description="Low complexity" evidence="4">
    <location>
        <begin position="999"/>
        <end position="1016"/>
    </location>
</feature>
<feature type="compositionally biased region" description="Low complexity" evidence="4">
    <location>
        <begin position="1062"/>
        <end position="1072"/>
    </location>
</feature>
<feature type="site" description="Cleavage; by CASP3" evidence="1">
    <location>
        <begin position="997"/>
        <end position="998"/>
    </location>
</feature>
<feature type="modified residue" description="N-acetylmethionine" evidence="1">
    <location>
        <position position="1"/>
    </location>
</feature>
<feature type="modified residue" description="Phosphoserine" evidence="1">
    <location>
        <position position="96"/>
    </location>
</feature>
<feature type="modified residue" description="Phosphothreonine" evidence="1">
    <location>
        <position position="117"/>
    </location>
</feature>
<feature type="modified residue" description="Phosphoserine" evidence="1">
    <location>
        <position position="960"/>
    </location>
</feature>
<feature type="modified residue" description="Phosphoserine" evidence="1">
    <location>
        <position position="969"/>
    </location>
</feature>
<feature type="modified residue" description="Phosphothreonine" evidence="1">
    <location>
        <position position="1049"/>
    </location>
</feature>
<feature type="modified residue" description="Phosphoserine" evidence="1">
    <location>
        <position position="1077"/>
    </location>
</feature>
<feature type="modified residue" description="Phosphoserine" evidence="1">
    <location>
        <position position="1113"/>
    </location>
</feature>
<feature type="splice variant" id="VSP_040437" description="In isoform 2." evidence="5">
    <location>
        <position position="522"/>
    </location>
</feature>
<feature type="splice variant" id="VSP_040438" description="In isoform 2." evidence="5">
    <location>
        <begin position="1049"/>
        <end position="1097"/>
    </location>
</feature>
<feature type="sequence conflict" description="In Ref. 1; ABX82810." evidence="5" ref="1">
    <original>F</original>
    <variation>S</variation>
    <location>
        <position position="725"/>
    </location>
</feature>
<feature type="sequence conflict" description="In Ref. 1; ABX82810." evidence="5" ref="1">
    <original>Q</original>
    <variation>L</variation>
    <location>
        <position position="996"/>
    </location>
</feature>
<dbReference type="EMBL" id="EU282341">
    <property type="protein sequence ID" value="ABX82810.1"/>
    <property type="molecule type" value="mRNA"/>
</dbReference>
<dbReference type="EMBL" id="BX548169">
    <property type="protein sequence ID" value="CAN59675.1"/>
    <property type="molecule type" value="Genomic_DNA"/>
</dbReference>
<dbReference type="EMBL" id="BX548169">
    <property type="protein sequence ID" value="CAN59676.1"/>
    <property type="molecule type" value="Genomic_DNA"/>
</dbReference>
<dbReference type="EMBL" id="BX548169">
    <property type="protein sequence ID" value="CAN59677.1"/>
    <property type="status" value="ALT_SEQ"/>
    <property type="molecule type" value="Genomic_DNA"/>
</dbReference>
<dbReference type="RefSeq" id="NP_001138854.1">
    <molecule id="A5D9M6-1"/>
    <property type="nucleotide sequence ID" value="NM_001145382.1"/>
</dbReference>
<dbReference type="RefSeq" id="XP_005665832.1">
    <property type="nucleotide sequence ID" value="XM_005665775.2"/>
</dbReference>
<dbReference type="SMR" id="A5D9M6"/>
<dbReference type="FunCoup" id="A5D9M6">
    <property type="interactions" value="1942"/>
</dbReference>
<dbReference type="IntAct" id="A5D9M6">
    <property type="interactions" value="1"/>
</dbReference>
<dbReference type="STRING" id="9823.ENSSSCP00000001500"/>
<dbReference type="GlyGen" id="A5D9M6">
    <property type="glycosylation" value="3 sites"/>
</dbReference>
<dbReference type="PaxDb" id="9823-ENSSSCP00000001500"/>
<dbReference type="PeptideAtlas" id="A5D9M6"/>
<dbReference type="Ensembl" id="ENSSSCT00025108140.1">
    <molecule id="A5D9M6-1"/>
    <property type="protein sequence ID" value="ENSSSCP00025048949.1"/>
    <property type="gene ID" value="ENSSSCG00025077573.1"/>
</dbReference>
<dbReference type="Ensembl" id="ENSSSCT00025108155.1">
    <molecule id="A5D9M6-1"/>
    <property type="protein sequence ID" value="ENSSSCP00025048953.1"/>
    <property type="gene ID" value="ENSSSCG00025077573.1"/>
</dbReference>
<dbReference type="Ensembl" id="ENSSSCT00030090218.1">
    <molecule id="A5D9M6-1"/>
    <property type="protein sequence ID" value="ENSSSCP00030041572.1"/>
    <property type="gene ID" value="ENSSSCG00030062793.1"/>
</dbReference>
<dbReference type="Ensembl" id="ENSSSCT00030090318.1">
    <molecule id="A5D9M6-1"/>
    <property type="protein sequence ID" value="ENSSSCP00030041615.1"/>
    <property type="gene ID" value="ENSSSCG00030062793.1"/>
</dbReference>
<dbReference type="Ensembl" id="ENSSSCT00040092025.1">
    <property type="protein sequence ID" value="ENSSSCP00040040602.1"/>
    <property type="gene ID" value="ENSSSCG00040061565.1"/>
</dbReference>
<dbReference type="Ensembl" id="ENSSSCT00040092992.1">
    <molecule id="A5D9M6-1"/>
    <property type="protein sequence ID" value="ENSSSCP00040041083.1"/>
    <property type="gene ID" value="ENSSSCG00040061565.1"/>
</dbReference>
<dbReference type="Ensembl" id="ENSSSCT00045063617.1">
    <molecule id="A5D9M6-1"/>
    <property type="protein sequence ID" value="ENSSSCP00045044891.1"/>
    <property type="gene ID" value="ENSSSCG00045032435.1"/>
</dbReference>
<dbReference type="Ensembl" id="ENSSSCT00045063926.1">
    <molecule id="A5D9M6-1"/>
    <property type="protein sequence ID" value="ENSSSCP00045045125.1"/>
    <property type="gene ID" value="ENSSSCG00045032435.1"/>
</dbReference>
<dbReference type="Ensembl" id="ENSSSCT00050010383.1">
    <molecule id="A5D9M6-1"/>
    <property type="protein sequence ID" value="ENSSSCP00050004452.1"/>
    <property type="gene ID" value="ENSSSCG00050006825.1"/>
</dbReference>
<dbReference type="Ensembl" id="ENSSSCT00050010432.1">
    <molecule id="A5D9M6-1"/>
    <property type="protein sequence ID" value="ENSSSCP00050004473.1"/>
    <property type="gene ID" value="ENSSSCG00050006825.1"/>
</dbReference>
<dbReference type="Ensembl" id="ENSSSCT00055055086.1">
    <molecule id="A5D9M6-1"/>
    <property type="protein sequence ID" value="ENSSSCP00055043953.1"/>
    <property type="gene ID" value="ENSSSCG00055025612.1"/>
</dbReference>
<dbReference type="Ensembl" id="ENSSSCT00055055423.1">
    <molecule id="A5D9M6-1"/>
    <property type="protein sequence ID" value="ENSSSCP00055044239.1"/>
    <property type="gene ID" value="ENSSSCG00055025612.1"/>
</dbReference>
<dbReference type="Ensembl" id="ENSSSCT00065050051.1">
    <molecule id="A5D9M6-1"/>
    <property type="protein sequence ID" value="ENSSSCP00065021657.1"/>
    <property type="gene ID" value="ENSSSCG00065036083.1"/>
</dbReference>
<dbReference type="Ensembl" id="ENSSSCT00065050074.1">
    <molecule id="A5D9M6-1"/>
    <property type="protein sequence ID" value="ENSSSCP00065021668.1"/>
    <property type="gene ID" value="ENSSSCG00065036083.1"/>
</dbReference>
<dbReference type="Ensembl" id="ENSSSCT00110043978">
    <molecule id="A5D9M6-1"/>
    <property type="protein sequence ID" value="ENSSSCP00110030979"/>
    <property type="gene ID" value="ENSSSCG00110022542"/>
</dbReference>
<dbReference type="Ensembl" id="ENSSSCT00115020832">
    <molecule id="A5D9M6-1"/>
    <property type="protein sequence ID" value="ENSSSCP00115019729"/>
    <property type="gene ID" value="ENSSSCG00115011946"/>
</dbReference>
<dbReference type="Ensembl" id="ENSSSCT00130043728">
    <molecule id="A5D9M6-1"/>
    <property type="protein sequence ID" value="ENSSSCP00130030743"/>
    <property type="gene ID" value="ENSSSCG00130022599"/>
</dbReference>
<dbReference type="GeneID" id="100153950"/>
<dbReference type="KEGG" id="ssc:100153950"/>
<dbReference type="CTD" id="7917"/>
<dbReference type="eggNOG" id="KOG4248">
    <property type="taxonomic scope" value="Eukaryota"/>
</dbReference>
<dbReference type="HOGENOM" id="CLU_012159_0_0_1"/>
<dbReference type="InParanoid" id="A5D9M6"/>
<dbReference type="OrthoDB" id="1885901at2759"/>
<dbReference type="TreeFam" id="TF328437"/>
<dbReference type="Proteomes" id="UP000008227">
    <property type="component" value="Unplaced"/>
</dbReference>
<dbReference type="Proteomes" id="UP000314985">
    <property type="component" value="Unplaced"/>
</dbReference>
<dbReference type="Proteomes" id="UP000694570">
    <property type="component" value="Unplaced"/>
</dbReference>
<dbReference type="Proteomes" id="UP000694571">
    <property type="component" value="Unplaced"/>
</dbReference>
<dbReference type="Proteomes" id="UP000694720">
    <property type="component" value="Unplaced"/>
</dbReference>
<dbReference type="Proteomes" id="UP000694722">
    <property type="component" value="Unplaced"/>
</dbReference>
<dbReference type="Proteomes" id="UP000694723">
    <property type="component" value="Unplaced"/>
</dbReference>
<dbReference type="Proteomes" id="UP000694724">
    <property type="component" value="Unplaced"/>
</dbReference>
<dbReference type="Proteomes" id="UP000694725">
    <property type="component" value="Unplaced"/>
</dbReference>
<dbReference type="Proteomes" id="UP000694726">
    <property type="component" value="Unplaced"/>
</dbReference>
<dbReference type="Proteomes" id="UP000694727">
    <property type="component" value="Unplaced"/>
</dbReference>
<dbReference type="Proteomes" id="UP000694728">
    <property type="component" value="Unplaced"/>
</dbReference>
<dbReference type="GO" id="GO:0071818">
    <property type="term" value="C:BAT3 complex"/>
    <property type="evidence" value="ECO:0000250"/>
    <property type="project" value="UniProtKB"/>
</dbReference>
<dbReference type="GO" id="GO:0005829">
    <property type="term" value="C:cytosol"/>
    <property type="evidence" value="ECO:0000250"/>
    <property type="project" value="UniProtKB"/>
</dbReference>
<dbReference type="GO" id="GO:0005576">
    <property type="term" value="C:extracellular region"/>
    <property type="evidence" value="ECO:0007669"/>
    <property type="project" value="UniProtKB-SubCell"/>
</dbReference>
<dbReference type="GO" id="GO:0005634">
    <property type="term" value="C:nucleus"/>
    <property type="evidence" value="ECO:0000250"/>
    <property type="project" value="UniProtKB"/>
</dbReference>
<dbReference type="GO" id="GO:0051787">
    <property type="term" value="F:misfolded protein binding"/>
    <property type="evidence" value="ECO:0000318"/>
    <property type="project" value="GO_Central"/>
</dbReference>
<dbReference type="GO" id="GO:0031593">
    <property type="term" value="F:polyubiquitin modification-dependent protein binding"/>
    <property type="evidence" value="ECO:0000250"/>
    <property type="project" value="UniProtKB"/>
</dbReference>
<dbReference type="GO" id="GO:0070628">
    <property type="term" value="F:proteasome binding"/>
    <property type="evidence" value="ECO:0000250"/>
    <property type="project" value="UniProtKB"/>
</dbReference>
<dbReference type="GO" id="GO:0043022">
    <property type="term" value="F:ribosome binding"/>
    <property type="evidence" value="ECO:0000250"/>
    <property type="project" value="UniProtKB"/>
</dbReference>
<dbReference type="GO" id="GO:0006915">
    <property type="term" value="P:apoptotic process"/>
    <property type="evidence" value="ECO:0000250"/>
    <property type="project" value="UniProtKB"/>
</dbReference>
<dbReference type="GO" id="GO:0007420">
    <property type="term" value="P:brain development"/>
    <property type="evidence" value="ECO:0000250"/>
    <property type="project" value="UniProtKB"/>
</dbReference>
<dbReference type="GO" id="GO:0030154">
    <property type="term" value="P:cell differentiation"/>
    <property type="evidence" value="ECO:0007669"/>
    <property type="project" value="UniProtKB-KW"/>
</dbReference>
<dbReference type="GO" id="GO:0006325">
    <property type="term" value="P:chromatin organization"/>
    <property type="evidence" value="ECO:0007669"/>
    <property type="project" value="UniProtKB-KW"/>
</dbReference>
<dbReference type="GO" id="GO:0061857">
    <property type="term" value="P:endoplasmic reticulum stress-induced pre-emptive quality control"/>
    <property type="evidence" value="ECO:0000250"/>
    <property type="project" value="UniProtKB"/>
</dbReference>
<dbReference type="GO" id="GO:0036503">
    <property type="term" value="P:ERAD pathway"/>
    <property type="evidence" value="ECO:0000250"/>
    <property type="project" value="UniProtKB"/>
</dbReference>
<dbReference type="GO" id="GO:0002376">
    <property type="term" value="P:immune system process"/>
    <property type="evidence" value="ECO:0007669"/>
    <property type="project" value="UniProtKB-KW"/>
</dbReference>
<dbReference type="GO" id="GO:0018393">
    <property type="term" value="P:internal peptidyl-lysine acetylation"/>
    <property type="evidence" value="ECO:0000250"/>
    <property type="project" value="UniProtKB"/>
</dbReference>
<dbReference type="GO" id="GO:0042771">
    <property type="term" value="P:intrinsic apoptotic signaling pathway in response to DNA damage by p53 class mediator"/>
    <property type="evidence" value="ECO:0000250"/>
    <property type="project" value="UniProtKB"/>
</dbReference>
<dbReference type="GO" id="GO:0070059">
    <property type="term" value="P:intrinsic apoptotic signaling pathway in response to endoplasmic reticulum stress"/>
    <property type="evidence" value="ECO:0000250"/>
    <property type="project" value="UniProtKB"/>
</dbReference>
<dbReference type="GO" id="GO:0001822">
    <property type="term" value="P:kidney development"/>
    <property type="evidence" value="ECO:0000250"/>
    <property type="project" value="UniProtKB"/>
</dbReference>
<dbReference type="GO" id="GO:0030324">
    <property type="term" value="P:lung development"/>
    <property type="evidence" value="ECO:0000250"/>
    <property type="project" value="UniProtKB"/>
</dbReference>
<dbReference type="GO" id="GO:0032435">
    <property type="term" value="P:negative regulation of proteasomal ubiquitin-dependent protein catabolic process"/>
    <property type="evidence" value="ECO:0000250"/>
    <property type="project" value="UniProtKB"/>
</dbReference>
<dbReference type="GO" id="GO:0045861">
    <property type="term" value="P:negative regulation of proteolysis"/>
    <property type="evidence" value="ECO:0000250"/>
    <property type="project" value="UniProtKB"/>
</dbReference>
<dbReference type="GO" id="GO:0010498">
    <property type="term" value="P:proteasomal protein catabolic process"/>
    <property type="evidence" value="ECO:0000250"/>
    <property type="project" value="UniProtKB"/>
</dbReference>
<dbReference type="GO" id="GO:0050821">
    <property type="term" value="P:protein stabilization"/>
    <property type="evidence" value="ECO:0000250"/>
    <property type="project" value="UniProtKB"/>
</dbReference>
<dbReference type="GO" id="GO:0042981">
    <property type="term" value="P:regulation of apoptotic process"/>
    <property type="evidence" value="ECO:0000250"/>
    <property type="project" value="UniProtKB"/>
</dbReference>
<dbReference type="GO" id="GO:0045995">
    <property type="term" value="P:regulation of embryonic development"/>
    <property type="evidence" value="ECO:0000250"/>
    <property type="project" value="UniProtKB"/>
</dbReference>
<dbReference type="GO" id="GO:0007283">
    <property type="term" value="P:spermatogenesis"/>
    <property type="evidence" value="ECO:0000250"/>
    <property type="project" value="UniProtKB"/>
</dbReference>
<dbReference type="GO" id="GO:0007130">
    <property type="term" value="P:synaptonemal complex assembly"/>
    <property type="evidence" value="ECO:0000250"/>
    <property type="project" value="UniProtKB"/>
</dbReference>
<dbReference type="GO" id="GO:0071816">
    <property type="term" value="P:tail-anchored membrane protein insertion into ER membrane"/>
    <property type="evidence" value="ECO:0000250"/>
    <property type="project" value="UniProtKB"/>
</dbReference>
<dbReference type="GO" id="GO:0006511">
    <property type="term" value="P:ubiquitin-dependent protein catabolic process"/>
    <property type="evidence" value="ECO:0000250"/>
    <property type="project" value="UniProtKB"/>
</dbReference>
<dbReference type="CDD" id="cd01809">
    <property type="entry name" value="Ubl_BAG6"/>
    <property type="match status" value="1"/>
</dbReference>
<dbReference type="FunFam" id="3.10.20.90:FF:000041">
    <property type="entry name" value="large proline-rich protein BAG6 isoform X1"/>
    <property type="match status" value="1"/>
</dbReference>
<dbReference type="Gene3D" id="3.10.20.90">
    <property type="entry name" value="Phosphatidylinositol 3-kinase Catalytic Subunit, Chain A, domain 1"/>
    <property type="match status" value="1"/>
</dbReference>
<dbReference type="InterPro" id="IPR021925">
    <property type="entry name" value="BAG6"/>
</dbReference>
<dbReference type="InterPro" id="IPR048926">
    <property type="entry name" value="Bag6_BAGS"/>
</dbReference>
<dbReference type="InterPro" id="IPR000626">
    <property type="entry name" value="Ubiquitin-like_dom"/>
</dbReference>
<dbReference type="InterPro" id="IPR029071">
    <property type="entry name" value="Ubiquitin-like_domsf"/>
</dbReference>
<dbReference type="InterPro" id="IPR019954">
    <property type="entry name" value="Ubiquitin_CS"/>
</dbReference>
<dbReference type="PANTHER" id="PTHR15204">
    <property type="entry name" value="LARGE PROLINE-RICH PROTEIN BAG6"/>
    <property type="match status" value="1"/>
</dbReference>
<dbReference type="PANTHER" id="PTHR15204:SF0">
    <property type="entry name" value="LARGE PROLINE-RICH PROTEIN BAG6"/>
    <property type="match status" value="1"/>
</dbReference>
<dbReference type="Pfam" id="PF12057">
    <property type="entry name" value="BAG6"/>
    <property type="match status" value="1"/>
</dbReference>
<dbReference type="Pfam" id="PF20960">
    <property type="entry name" value="Bag6_BAGS"/>
    <property type="match status" value="1"/>
</dbReference>
<dbReference type="Pfam" id="PF00240">
    <property type="entry name" value="ubiquitin"/>
    <property type="match status" value="1"/>
</dbReference>
<dbReference type="SMART" id="SM00213">
    <property type="entry name" value="UBQ"/>
    <property type="match status" value="1"/>
</dbReference>
<dbReference type="SUPFAM" id="SSF54236">
    <property type="entry name" value="Ubiquitin-like"/>
    <property type="match status" value="1"/>
</dbReference>
<dbReference type="PROSITE" id="PS00299">
    <property type="entry name" value="UBIQUITIN_1"/>
    <property type="match status" value="1"/>
</dbReference>
<dbReference type="PROSITE" id="PS50053">
    <property type="entry name" value="UBIQUITIN_2"/>
    <property type="match status" value="1"/>
</dbReference>
<organism>
    <name type="scientific">Sus scrofa</name>
    <name type="common">Pig</name>
    <dbReference type="NCBI Taxonomy" id="9823"/>
    <lineage>
        <taxon>Eukaryota</taxon>
        <taxon>Metazoa</taxon>
        <taxon>Chordata</taxon>
        <taxon>Craniata</taxon>
        <taxon>Vertebrata</taxon>
        <taxon>Euteleostomi</taxon>
        <taxon>Mammalia</taxon>
        <taxon>Eutheria</taxon>
        <taxon>Laurasiatheria</taxon>
        <taxon>Artiodactyla</taxon>
        <taxon>Suina</taxon>
        <taxon>Suidae</taxon>
        <taxon>Sus</taxon>
    </lineage>
</organism>
<comment type="function">
    <text evidence="1">ATP-independent molecular chaperone preventing the aggregation of misfolded and hydrophobic patches-containing proteins. Functions as part of a cytosolic protein quality control complex, the BAG6/BAT3 complex, which maintains these client proteins in a soluble state and participates in their proper delivery to the endoplasmic reticulum or alternatively can promote their sorting to the proteasome where they undergo degradation. The BAG6/BAT3 complex is involved in the post-translational delivery of tail-anchored/type II transmembrane proteins to the endoplasmic reticulum membrane. Recruited to ribosomes, it interacts with the transmembrane region of newly synthesized tail-anchored proteins and together with SGTA and ASNA1 mediates their delivery to the endoplasmic reticulum. Client proteins that cannot be properly delivered to the endoplasmic reticulum are ubiquitinated by RNF126, an E3 ubiquitin-protein ligase associated with BAG6 and are sorted to the proteasome. SGTA which prevents the recruitment of RNF126 to BAG6 may negatively regulate the ubiquitination and the proteasomal degradation of client proteins. Similarly, the BAG6/BAT3 complex also functions as a sorting platform for proteins of the secretory pathway that are mislocalized to the cytosol either delivering them to the proteasome for degradation or to the endoplasmic reticulum. The BAG6/BAT3 complex also plays a role in the endoplasmic reticulum-associated degradation (ERAD), a quality control mechanism that eliminates unwanted proteins of the endoplasmic reticulum through their retrotranslocation to the cytosol and their targeting to the proteasome. It maintains these retrotranslocated proteins in an unfolded yet soluble state condition in the cytosol to ensure their proper delivery to the proteasome. BAG6 is also required for selective ubiquitin-mediated degradation of defective nascent chain polypeptides by the proteasome. In this context, it may participate in the production of antigenic peptides and play a role in antigen presentation in immune response. BAG6 is also involved in endoplasmic reticulum stress-induced pre-emptive quality control, a mechanism that selectively attenuates the translocation of newly synthesized proteins into the endoplasmic reticulum and reroutes them to the cytosol for proteasomal degradation. BAG6 may ensure the proper degradation of these proteins and thereby protects the endoplasmic reticulum from protein overload upon stress. By inhibiting the polyubiquitination and subsequent proteasomal degradation of HSPA2 it may also play a role in the assembly of the synaptonemal complex during spermatogenesis. Also positively regulates apoptosis by interacting with and stabilizing the proapoptotic factor AIFM1. By controlling the steady-state expression of the IGF1R receptor, indirectly regulates the insulin-like growth factor receptor signaling pathway.</text>
</comment>
<comment type="function">
    <text evidence="1">Involved in DNA damage-induced apoptosis: following DNA damage, accumulates in the nucleus and forms a complex with p300/EP300, enhancing p300/EP300-mediated p53/TP53 acetylation leading to increase p53/TP53 transcriptional activity. When nuclear, may also act as a component of some chromatin regulator complex that regulates histone 3 'Lys-4' dimethylation (H3K4me2).</text>
</comment>
<comment type="function">
    <text evidence="1">Released extracellularly via exosomes, it is a ligand of the natural killer/NK cells receptor NCR3 and stimulates NK cells cytotoxicity. It may thereby trigger NK cells cytotoxicity against neighboring tumor cells and immature myeloid dendritic cells (DC).</text>
</comment>
<comment type="function">
    <text evidence="1">May mediate ricin-induced apoptosis.</text>
</comment>
<comment type="subunit">
    <text evidence="1 2">Component of the BAG6/BAT3 complex, also named BAT3 complex, at least composed of BAG6, UBL4A and GET4/TRC35. Interacts with GET4; the interaction is direct and localizes BAG6 in the cytosol. Interacts with UBL4A; the interaction is direct and required for UBL4A protein stability. Interacts with AIFM1. Interacts with HSPA2. Interacts with CTCFL. Interacts with p300/EP300. Interacts (via ubiquitin-like domain) with RNF126; required for BAG6-dependent ubiquitination of proteins mislocalized to the cytosol. Interacts (via ubiquitin-like domain) with SGTA; SGTA competes with RNF126 by binding the same region of BAG6, thereby promoting deubiquitination of BAG6-target proteins and rescuing them from degradation. Interacts with ricin A chain. Interacts with VCP and AMFR; both form the VCP/p97-AMFR/gp78 complex. Interacts with SYVN1. Interacts with USP13; the interaction is direct and may mediate UBL4A deubiquitination. Interacts with ZFAND2B. Interacts with KPNA2. Interacts with UBQLN4 (By similarity).</text>
</comment>
<comment type="interaction">
    <interactant intactId="EBI-11702016">
        <id>A5D9M6</id>
    </interactant>
    <interactant intactId="EBI-11701979">
        <id>PRO_0000036687</id>
        <label>rep</label>
        <dbReference type="UniProtKB" id="Q04561"/>
    </interactant>
    <organismsDiffer>true</organismsDiffer>
    <experiments>2</experiments>
</comment>
<comment type="subcellular location">
    <subcellularLocation>
        <location evidence="1">Cytoplasm</location>
        <location evidence="1">Cytosol</location>
    </subcellularLocation>
    <subcellularLocation>
        <location evidence="1">Nucleus</location>
    </subcellularLocation>
    <subcellularLocation>
        <location evidence="1">Secreted</location>
        <location evidence="1">Extracellular exosome</location>
    </subcellularLocation>
    <text evidence="1">Normally localized in cytosol and nucleus, it can also be released extracellularly, in exosomes, by tumor and myeloid dendritic cells.</text>
</comment>
<comment type="alternative products">
    <event type="alternative splicing"/>
    <isoform>
        <id>A5D9M6-1</id>
        <name>1</name>
        <sequence type="displayed"/>
    </isoform>
    <isoform>
        <id>A5D9M6-2</id>
        <name>2</name>
        <sequence type="described" ref="VSP_040437 VSP_040438"/>
    </isoform>
</comment>
<comment type="domain">
    <text evidence="1">The ubiquitin-like domain mediates interaction with the E3 ubiquitin-protein ligase RNF126 which is responsible for the BAG6-dependent ubiquitination of client proteins. SGTA also binds this domain and competes with RNF126 to antagonize client protein ubiquitination and degradation. The ubiquitin-like domain also mediates the interaction with USP13.</text>
</comment>
<comment type="PTM">
    <text evidence="1">Ricin can induce a cleavage by the caspase CASP3. The released C-terminal peptide induces apoptosis.</text>
</comment>
<comment type="sequence caution" evidence="5">
    <conflict type="erroneous gene model prediction">
        <sequence resource="EMBL-CDS" id="CAN59677"/>
    </conflict>
</comment>
<reference key="1">
    <citation type="submission" date="2007-11" db="EMBL/GenBank/DDBJ databases">
        <title>Identification of single-nucleotide polymorphisms in coding sequences of genes in the SLA class III region by direct sequencing.</title>
        <authorList>
            <person name="Kim J.H."/>
            <person name="Jeon J.T."/>
        </authorList>
    </citation>
    <scope>NUCLEOTIDE SEQUENCE [MRNA] (ISOFORM 1)</scope>
</reference>
<reference key="2">
    <citation type="journal article" date="2007" name="Genome Biol.">
        <title>A high utility integrated map of the pig genome.</title>
        <authorList>
            <person name="Humphray S.J."/>
            <person name="Scott C.E."/>
            <person name="Clark R."/>
            <person name="Marron B."/>
            <person name="Bender C."/>
            <person name="Camm N."/>
            <person name="Davis J."/>
            <person name="Jenks A."/>
            <person name="Noon A."/>
            <person name="Patel M."/>
            <person name="Sehra H."/>
            <person name="Yang F."/>
            <person name="Rogatcheva M.B."/>
            <person name="Milan D."/>
            <person name="Chardon P."/>
            <person name="Rohrer G."/>
            <person name="Nonneman D."/>
            <person name="de Jong P."/>
            <person name="Meyers S.N."/>
            <person name="Archibald A."/>
            <person name="Beever J.E."/>
            <person name="Schook L.B."/>
            <person name="Rogers J."/>
        </authorList>
    </citation>
    <scope>NUCLEOTIDE SEQUENCE [LARGE SCALE GENOMIC DNA]</scope>
</reference>
<protein>
    <recommendedName>
        <fullName evidence="5">Large proline-rich protein BAG6</fullName>
    </recommendedName>
    <alternativeName>
        <fullName evidence="1">BCL2-associated athanogene 6</fullName>
    </alternativeName>
    <alternativeName>
        <fullName evidence="6">HLA-B-associated transcript 3</fullName>
    </alternativeName>
</protein>
<name>BAG6_PIG</name>
<gene>
    <name evidence="1" type="primary">BAG6</name>
    <name evidence="6" type="synonym">BAT3</name>
</gene>
<keyword id="KW-0007">Acetylation</keyword>
<keyword id="KW-0025">Alternative splicing</keyword>
<keyword id="KW-0053">Apoptosis</keyword>
<keyword id="KW-0143">Chaperone</keyword>
<keyword id="KW-0156">Chromatin regulator</keyword>
<keyword id="KW-0963">Cytoplasm</keyword>
<keyword id="KW-0221">Differentiation</keyword>
<keyword id="KW-0391">Immunity</keyword>
<keyword id="KW-0539">Nucleus</keyword>
<keyword id="KW-0597">Phosphoprotein</keyword>
<keyword id="KW-1185">Reference proteome</keyword>
<keyword id="KW-0677">Repeat</keyword>
<keyword id="KW-0964">Secreted</keyword>
<keyword id="KW-0744">Spermatogenesis</keyword>
<keyword id="KW-0813">Transport</keyword>
<proteinExistence type="evidence at protein level"/>